<accession>Q9ZVH5</accession>
<gene>
    <name evidence="3" type="primary">DTX53</name>
    <name evidence="5" type="ordered locus">At2g38510</name>
    <name evidence="6" type="ORF">T6A23.29</name>
</gene>
<sequence length="486" mass="52534">MQVGEEMASLTKIACPIVMTSLLIFSRSIISMWFLSHLGKVELAGGALAMGFGNITGVSVLKGLSVGMDPICGQAFGAKRWTVLSHTFQKMFCLLIVVSVPIAVTWLNIEPIFLRLGQDPDITKVAKTYMLFFVPELLAQAMLHPLRTFLRTQGLTSPLTISAIVSILLHPLFNYVFVVRMRLGVKGVAIAMAFNTMNIDVGLLVYTCFSDSLIKPWEGLALRSLFRGWWPLLSLAAPSAISVCLEYWWYEIMLFLCGLLGNPKASVAAMGILIQTTGILYVVPFAISSAIATRVGHALGGGQPTRAQCTTVIGLILAVAYGLAAAVFVTALRSVWGKMFTDEPEILGLISAALPILGLCEIGNSPQTAACGVLTGTARPKDGARVNLCAFYIVGLPVAVTTTFGFKVGFRGLWFGLLSAQMTCLVMMLYTLIRTDWSHQVKRAEELTSAAADKSHSEDETVHAEVQDDDDVSSNDLEIGLLQNTN</sequence>
<evidence type="ECO:0000255" key="1"/>
<evidence type="ECO:0000256" key="2">
    <source>
        <dbReference type="SAM" id="MobiDB-lite"/>
    </source>
</evidence>
<evidence type="ECO:0000303" key="3">
    <source>
    </source>
</evidence>
<evidence type="ECO:0000305" key="4"/>
<evidence type="ECO:0000312" key="5">
    <source>
        <dbReference type="Araport" id="AT2G38510"/>
    </source>
</evidence>
<evidence type="ECO:0000312" key="6">
    <source>
        <dbReference type="EMBL" id="AAC67367.1"/>
    </source>
</evidence>
<organism>
    <name type="scientific">Arabidopsis thaliana</name>
    <name type="common">Mouse-ear cress</name>
    <dbReference type="NCBI Taxonomy" id="3702"/>
    <lineage>
        <taxon>Eukaryota</taxon>
        <taxon>Viridiplantae</taxon>
        <taxon>Streptophyta</taxon>
        <taxon>Embryophyta</taxon>
        <taxon>Tracheophyta</taxon>
        <taxon>Spermatophyta</taxon>
        <taxon>Magnoliopsida</taxon>
        <taxon>eudicotyledons</taxon>
        <taxon>Gunneridae</taxon>
        <taxon>Pentapetalae</taxon>
        <taxon>rosids</taxon>
        <taxon>malvids</taxon>
        <taxon>Brassicales</taxon>
        <taxon>Brassicaceae</taxon>
        <taxon>Camelineae</taxon>
        <taxon>Arabidopsis</taxon>
    </lineage>
</organism>
<protein>
    <recommendedName>
        <fullName evidence="3">Protein DETOXIFICATION 53</fullName>
        <shortName evidence="3">AtDTX53</shortName>
    </recommendedName>
    <alternativeName>
        <fullName evidence="4">Multidrug and toxic compound extrusion protein 53</fullName>
        <shortName evidence="4">MATE protein 53</shortName>
    </alternativeName>
</protein>
<reference key="1">
    <citation type="journal article" date="1999" name="Nature">
        <title>Sequence and analysis of chromosome 2 of the plant Arabidopsis thaliana.</title>
        <authorList>
            <person name="Lin X."/>
            <person name="Kaul S."/>
            <person name="Rounsley S.D."/>
            <person name="Shea T.P."/>
            <person name="Benito M.-I."/>
            <person name="Town C.D."/>
            <person name="Fujii C.Y."/>
            <person name="Mason T.M."/>
            <person name="Bowman C.L."/>
            <person name="Barnstead M.E."/>
            <person name="Feldblyum T.V."/>
            <person name="Buell C.R."/>
            <person name="Ketchum K.A."/>
            <person name="Lee J.J."/>
            <person name="Ronning C.M."/>
            <person name="Koo H.L."/>
            <person name="Moffat K.S."/>
            <person name="Cronin L.A."/>
            <person name="Shen M."/>
            <person name="Pai G."/>
            <person name="Van Aken S."/>
            <person name="Umayam L."/>
            <person name="Tallon L.J."/>
            <person name="Gill J.E."/>
            <person name="Adams M.D."/>
            <person name="Carrera A.J."/>
            <person name="Creasy T.H."/>
            <person name="Goodman H.M."/>
            <person name="Somerville C.R."/>
            <person name="Copenhaver G.P."/>
            <person name="Preuss D."/>
            <person name="Nierman W.C."/>
            <person name="White O."/>
            <person name="Eisen J.A."/>
            <person name="Salzberg S.L."/>
            <person name="Fraser C.M."/>
            <person name="Venter J.C."/>
        </authorList>
    </citation>
    <scope>NUCLEOTIDE SEQUENCE [LARGE SCALE GENOMIC DNA]</scope>
    <source>
        <strain>cv. Columbia</strain>
    </source>
</reference>
<reference key="2">
    <citation type="journal article" date="2017" name="Plant J.">
        <title>Araport11: a complete reannotation of the Arabidopsis thaliana reference genome.</title>
        <authorList>
            <person name="Cheng C.Y."/>
            <person name="Krishnakumar V."/>
            <person name="Chan A.P."/>
            <person name="Thibaud-Nissen F."/>
            <person name="Schobel S."/>
            <person name="Town C.D."/>
        </authorList>
    </citation>
    <scope>GENOME REANNOTATION</scope>
    <source>
        <strain>cv. Columbia</strain>
    </source>
</reference>
<reference key="3">
    <citation type="submission" date="2005-05" db="EMBL/GenBank/DDBJ databases">
        <authorList>
            <person name="Underwood B.A."/>
            <person name="Xiao Y.-L."/>
            <person name="Moskal W.A. Jr."/>
            <person name="Monaghan E.L."/>
            <person name="Wang W."/>
            <person name="Redman J.C."/>
            <person name="Wu H.C."/>
            <person name="Utterback T."/>
            <person name="Town C.D."/>
        </authorList>
    </citation>
    <scope>NUCLEOTIDE SEQUENCE [LARGE SCALE MRNA]</scope>
    <source>
        <strain>cv. Columbia</strain>
    </source>
</reference>
<reference key="4">
    <citation type="journal article" date="2002" name="J. Biol. Chem.">
        <title>Functional cloning and characterization of a plant efflux carrier for multidrug and heavy metal detoxification.</title>
        <authorList>
            <person name="Li L."/>
            <person name="He Z."/>
            <person name="Pandey G.K."/>
            <person name="Tsuchiya T."/>
            <person name="Luan S."/>
        </authorList>
    </citation>
    <scope>GENE FAMILY</scope>
    <scope>NOMENCLATURE</scope>
</reference>
<reference key="5">
    <citation type="journal article" date="2003" name="Eur. J. Biochem.">
        <title>The multidrug/oligosaccharidyl-lipid/polysaccharide (MOP) exporter superfamily.</title>
        <authorList>
            <person name="Hvorup R.N."/>
            <person name="Winnen B."/>
            <person name="Chang A.B."/>
            <person name="Jiang Y."/>
            <person name="Zhou X.F."/>
            <person name="Saier M.H. Jr."/>
        </authorList>
    </citation>
    <scope>GENE FAMILY</scope>
</reference>
<name>DTX53_ARATH</name>
<keyword id="KW-0472">Membrane</keyword>
<keyword id="KW-1185">Reference proteome</keyword>
<keyword id="KW-0812">Transmembrane</keyword>
<keyword id="KW-1133">Transmembrane helix</keyword>
<keyword id="KW-0813">Transport</keyword>
<proteinExistence type="evidence at transcript level"/>
<feature type="chain" id="PRO_0000434087" description="Protein DETOXIFICATION 53">
    <location>
        <begin position="1"/>
        <end position="486"/>
    </location>
</feature>
<feature type="transmembrane region" description="Helical" evidence="1">
    <location>
        <begin position="15"/>
        <end position="35"/>
    </location>
</feature>
<feature type="transmembrane region" description="Helical" evidence="1">
    <location>
        <begin position="45"/>
        <end position="65"/>
    </location>
</feature>
<feature type="transmembrane region" description="Helical" evidence="1">
    <location>
        <begin position="94"/>
        <end position="114"/>
    </location>
</feature>
<feature type="transmembrane region" description="Helical" evidence="1">
    <location>
        <begin position="130"/>
        <end position="150"/>
    </location>
</feature>
<feature type="transmembrane region" description="Helical" evidence="1">
    <location>
        <begin position="159"/>
        <end position="179"/>
    </location>
</feature>
<feature type="transmembrane region" description="Helical" evidence="1">
    <location>
        <begin position="187"/>
        <end position="207"/>
    </location>
</feature>
<feature type="transmembrane region" description="Helical" evidence="1">
    <location>
        <begin position="240"/>
        <end position="260"/>
    </location>
</feature>
<feature type="transmembrane region" description="Helical" evidence="1">
    <location>
        <begin position="267"/>
        <end position="287"/>
    </location>
</feature>
<feature type="transmembrane region" description="Helical" evidence="1">
    <location>
        <begin position="312"/>
        <end position="332"/>
    </location>
</feature>
<feature type="transmembrane region" description="Helical" evidence="1">
    <location>
        <begin position="346"/>
        <end position="366"/>
    </location>
</feature>
<feature type="transmembrane region" description="Helical" evidence="1">
    <location>
        <begin position="386"/>
        <end position="406"/>
    </location>
</feature>
<feature type="transmembrane region" description="Helical" evidence="1">
    <location>
        <begin position="413"/>
        <end position="433"/>
    </location>
</feature>
<feature type="region of interest" description="Disordered" evidence="2">
    <location>
        <begin position="448"/>
        <end position="474"/>
    </location>
</feature>
<feature type="compositionally biased region" description="Basic and acidic residues" evidence="2">
    <location>
        <begin position="453"/>
        <end position="466"/>
    </location>
</feature>
<dbReference type="EMBL" id="AC005499">
    <property type="protein sequence ID" value="AAC67367.1"/>
    <property type="molecule type" value="Genomic_DNA"/>
</dbReference>
<dbReference type="EMBL" id="CP002685">
    <property type="protein sequence ID" value="AEC09545.1"/>
    <property type="molecule type" value="Genomic_DNA"/>
</dbReference>
<dbReference type="EMBL" id="DQ056572">
    <property type="protein sequence ID" value="AAY78722.1"/>
    <property type="molecule type" value="mRNA"/>
</dbReference>
<dbReference type="PIR" id="H84805">
    <property type="entry name" value="H84805"/>
</dbReference>
<dbReference type="RefSeq" id="NP_181385.1">
    <property type="nucleotide sequence ID" value="NM_129408.2"/>
</dbReference>
<dbReference type="SMR" id="Q9ZVH5"/>
<dbReference type="FunCoup" id="Q9ZVH5">
    <property type="interactions" value="9"/>
</dbReference>
<dbReference type="IntAct" id="Q9ZVH5">
    <property type="interactions" value="34"/>
</dbReference>
<dbReference type="STRING" id="3702.Q9ZVH5"/>
<dbReference type="PaxDb" id="3702-AT2G38510.1"/>
<dbReference type="EnsemblPlants" id="AT2G38510.1">
    <property type="protein sequence ID" value="AT2G38510.1"/>
    <property type="gene ID" value="AT2G38510"/>
</dbReference>
<dbReference type="GeneID" id="818433"/>
<dbReference type="Gramene" id="AT2G38510.1">
    <property type="protein sequence ID" value="AT2G38510.1"/>
    <property type="gene ID" value="AT2G38510"/>
</dbReference>
<dbReference type="KEGG" id="ath:AT2G38510"/>
<dbReference type="Araport" id="AT2G38510"/>
<dbReference type="TAIR" id="AT2G38510"/>
<dbReference type="eggNOG" id="KOG1347">
    <property type="taxonomic scope" value="Eukaryota"/>
</dbReference>
<dbReference type="HOGENOM" id="CLU_012893_1_0_1"/>
<dbReference type="InParanoid" id="Q9ZVH5"/>
<dbReference type="OMA" id="IAMAFNT"/>
<dbReference type="OrthoDB" id="2126698at2759"/>
<dbReference type="PhylomeDB" id="Q9ZVH5"/>
<dbReference type="PRO" id="PR:Q9ZVH5"/>
<dbReference type="Proteomes" id="UP000006548">
    <property type="component" value="Chromosome 2"/>
</dbReference>
<dbReference type="ExpressionAtlas" id="Q9ZVH5">
    <property type="expression patterns" value="baseline and differential"/>
</dbReference>
<dbReference type="GO" id="GO:0016020">
    <property type="term" value="C:membrane"/>
    <property type="evidence" value="ECO:0007669"/>
    <property type="project" value="UniProtKB-SubCell"/>
</dbReference>
<dbReference type="GO" id="GO:0015297">
    <property type="term" value="F:antiporter activity"/>
    <property type="evidence" value="ECO:0007669"/>
    <property type="project" value="InterPro"/>
</dbReference>
<dbReference type="GO" id="GO:0042910">
    <property type="term" value="F:xenobiotic transmembrane transporter activity"/>
    <property type="evidence" value="ECO:0007669"/>
    <property type="project" value="InterPro"/>
</dbReference>
<dbReference type="GO" id="GO:1990961">
    <property type="term" value="P:xenobiotic detoxification by transmembrane export across the plasma membrane"/>
    <property type="evidence" value="ECO:0007669"/>
    <property type="project" value="InterPro"/>
</dbReference>
<dbReference type="CDD" id="cd13132">
    <property type="entry name" value="MATE_eukaryotic"/>
    <property type="match status" value="1"/>
</dbReference>
<dbReference type="InterPro" id="IPR045069">
    <property type="entry name" value="MATE_euk"/>
</dbReference>
<dbReference type="InterPro" id="IPR002528">
    <property type="entry name" value="MATE_fam"/>
</dbReference>
<dbReference type="NCBIfam" id="TIGR00797">
    <property type="entry name" value="matE"/>
    <property type="match status" value="1"/>
</dbReference>
<dbReference type="PANTHER" id="PTHR11206">
    <property type="entry name" value="MULTIDRUG RESISTANCE PROTEIN"/>
    <property type="match status" value="1"/>
</dbReference>
<dbReference type="Pfam" id="PF01554">
    <property type="entry name" value="MatE"/>
    <property type="match status" value="2"/>
</dbReference>
<comment type="subcellular location">
    <subcellularLocation>
        <location evidence="1">Membrane</location>
        <topology evidence="1">Multi-pass membrane protein</topology>
    </subcellularLocation>
</comment>
<comment type="similarity">
    <text evidence="4">Belongs to the multi antimicrobial extrusion (MATE) (TC 2.A.66.1) family.</text>
</comment>